<sequence>MEASRVKPGFNGVGMAAGSVNGSSRRPGPGLGYGYGYYMGSGAAAGGSGRAAQAPVDGCSVALRVFVVASTLVSAVVMGVDRQTRTIQITITDALPPLEVPLTANWSYSSAFVYFVVANAMVCLFSAAALAACRSRAAMVPVMVGDLLALALLYSAVGAAAEFGILGERGNSHVRWAKVCNVYGRFCDRAMAAVIVSLIGAFANLVLLMLNILTIHKSSSYY</sequence>
<name>CSPL6_SORBI</name>
<organism>
    <name type="scientific">Sorghum bicolor</name>
    <name type="common">Sorghum</name>
    <name type="synonym">Sorghum vulgare</name>
    <dbReference type="NCBI Taxonomy" id="4558"/>
    <lineage>
        <taxon>Eukaryota</taxon>
        <taxon>Viridiplantae</taxon>
        <taxon>Streptophyta</taxon>
        <taxon>Embryophyta</taxon>
        <taxon>Tracheophyta</taxon>
        <taxon>Spermatophyta</taxon>
        <taxon>Magnoliopsida</taxon>
        <taxon>Liliopsida</taxon>
        <taxon>Poales</taxon>
        <taxon>Poaceae</taxon>
        <taxon>PACMAD clade</taxon>
        <taxon>Panicoideae</taxon>
        <taxon>Andropogonodae</taxon>
        <taxon>Andropogoneae</taxon>
        <taxon>Sorghinae</taxon>
        <taxon>Sorghum</taxon>
    </lineage>
</organism>
<feature type="chain" id="PRO_0000391516" description="CASP-like protein 1E1">
    <location>
        <begin position="1"/>
        <end position="222"/>
    </location>
</feature>
<feature type="topological domain" description="Cytoplasmic" evidence="2">
    <location>
        <begin position="1"/>
        <end position="59"/>
    </location>
</feature>
<feature type="transmembrane region" description="Helical" evidence="2">
    <location>
        <begin position="60"/>
        <end position="80"/>
    </location>
</feature>
<feature type="topological domain" description="Extracellular" evidence="2">
    <location>
        <begin position="81"/>
        <end position="110"/>
    </location>
</feature>
<feature type="transmembrane region" description="Helical" evidence="2">
    <location>
        <begin position="111"/>
        <end position="131"/>
    </location>
</feature>
<feature type="topological domain" description="Cytoplasmic" evidence="2">
    <location>
        <begin position="132"/>
        <end position="146"/>
    </location>
</feature>
<feature type="transmembrane region" description="Helical" evidence="2">
    <location>
        <begin position="147"/>
        <end position="167"/>
    </location>
</feature>
<feature type="topological domain" description="Extracellular" evidence="2">
    <location>
        <begin position="168"/>
        <end position="189"/>
    </location>
</feature>
<feature type="transmembrane region" description="Helical" evidence="2">
    <location>
        <begin position="190"/>
        <end position="210"/>
    </location>
</feature>
<feature type="topological domain" description="Cytoplasmic" evidence="2">
    <location>
        <begin position="211"/>
        <end position="222"/>
    </location>
</feature>
<feature type="glycosylation site" description="N-linked (GlcNAc...) asparagine" evidence="2">
    <location>
        <position position="105"/>
    </location>
</feature>
<keyword id="KW-1003">Cell membrane</keyword>
<keyword id="KW-0325">Glycoprotein</keyword>
<keyword id="KW-0472">Membrane</keyword>
<keyword id="KW-1185">Reference proteome</keyword>
<keyword id="KW-0812">Transmembrane</keyword>
<keyword id="KW-1133">Transmembrane helix</keyword>
<reference key="1">
    <citation type="journal article" date="2009" name="Nature">
        <title>The Sorghum bicolor genome and the diversification of grasses.</title>
        <authorList>
            <person name="Paterson A.H."/>
            <person name="Bowers J.E."/>
            <person name="Bruggmann R."/>
            <person name="Dubchak I."/>
            <person name="Grimwood J."/>
            <person name="Gundlach H."/>
            <person name="Haberer G."/>
            <person name="Hellsten U."/>
            <person name="Mitros T."/>
            <person name="Poliakov A."/>
            <person name="Schmutz J."/>
            <person name="Spannagl M."/>
            <person name="Tang H."/>
            <person name="Wang X."/>
            <person name="Wicker T."/>
            <person name="Bharti A.K."/>
            <person name="Chapman J."/>
            <person name="Feltus F.A."/>
            <person name="Gowik U."/>
            <person name="Grigoriev I.V."/>
            <person name="Lyons E."/>
            <person name="Maher C.A."/>
            <person name="Martis M."/>
            <person name="Narechania A."/>
            <person name="Otillar R.P."/>
            <person name="Penning B.W."/>
            <person name="Salamov A.A."/>
            <person name="Wang Y."/>
            <person name="Zhang L."/>
            <person name="Carpita N.C."/>
            <person name="Freeling M."/>
            <person name="Gingle A.R."/>
            <person name="Hash C.T."/>
            <person name="Keller B."/>
            <person name="Klein P."/>
            <person name="Kresovich S."/>
            <person name="McCann M.C."/>
            <person name="Ming R."/>
            <person name="Peterson D.G."/>
            <person name="Mehboob-ur-Rahman M."/>
            <person name="Ware D."/>
            <person name="Westhoff P."/>
            <person name="Mayer K.F.X."/>
            <person name="Messing J."/>
            <person name="Rokhsar D.S."/>
        </authorList>
    </citation>
    <scope>NUCLEOTIDE SEQUENCE [LARGE SCALE GENOMIC DNA]</scope>
    <source>
        <strain>cv. BTx623</strain>
    </source>
</reference>
<reference key="2">
    <citation type="journal article" date="2018" name="Plant J.">
        <title>The Sorghum bicolor reference genome: improved assembly, gene annotations, a transcriptome atlas, and signatures of genome organization.</title>
        <authorList>
            <person name="McCormick R.F."/>
            <person name="Truong S.K."/>
            <person name="Sreedasyam A."/>
            <person name="Jenkins J."/>
            <person name="Shu S."/>
            <person name="Sims D."/>
            <person name="Kennedy M."/>
            <person name="Amirebrahimi M."/>
            <person name="Weers B.D."/>
            <person name="McKinley B."/>
            <person name="Mattison A."/>
            <person name="Morishige D.T."/>
            <person name="Grimwood J."/>
            <person name="Schmutz J."/>
            <person name="Mullet J.E."/>
        </authorList>
    </citation>
    <scope>GENOME REANNOTATION</scope>
    <source>
        <strain>cv. BTx623</strain>
    </source>
</reference>
<reference key="3">
    <citation type="journal article" date="2014" name="Plant Physiol.">
        <title>Functional and evolutionary analysis of the CASPARIAN STRIP MEMBRANE DOMAIN PROTEIN family.</title>
        <authorList>
            <person name="Roppolo D."/>
            <person name="Boeckmann B."/>
            <person name="Pfister A."/>
            <person name="Boutet E."/>
            <person name="Rubio M.C."/>
            <person name="Denervaud-Tendon V."/>
            <person name="Vermeer J.E."/>
            <person name="Gheyselinck J."/>
            <person name="Xenarios I."/>
            <person name="Geldner N."/>
        </authorList>
    </citation>
    <scope>GENE FAMILY</scope>
    <scope>NOMENCLATURE</scope>
</reference>
<proteinExistence type="evidence at transcript level"/>
<comment type="subunit">
    <text evidence="1">Homodimer and heterodimers.</text>
</comment>
<comment type="subcellular location">
    <subcellularLocation>
        <location evidence="1">Cell membrane</location>
        <topology evidence="1">Multi-pass membrane protein</topology>
    </subcellularLocation>
</comment>
<comment type="similarity">
    <text evidence="3">Belongs to the Casparian strip membrane proteins (CASP) family.</text>
</comment>
<evidence type="ECO:0000250" key="1"/>
<evidence type="ECO:0000255" key="2"/>
<evidence type="ECO:0000305" key="3"/>
<dbReference type="EMBL" id="CM000762">
    <property type="protein sequence ID" value="EES02949.1"/>
    <property type="molecule type" value="Genomic_DNA"/>
</dbReference>
<dbReference type="RefSeq" id="XP_002457829.1">
    <property type="nucleotide sequence ID" value="XM_002457784.1"/>
</dbReference>
<dbReference type="FunCoup" id="C5XKI6">
    <property type="interactions" value="303"/>
</dbReference>
<dbReference type="STRING" id="4558.C5XKI6"/>
<dbReference type="EnsemblPlants" id="EES02949">
    <property type="protein sequence ID" value="EES02949"/>
    <property type="gene ID" value="SORBI_3003G162100"/>
</dbReference>
<dbReference type="Gramene" id="EES02949">
    <property type="protein sequence ID" value="EES02949"/>
    <property type="gene ID" value="SORBI_3003G162100"/>
</dbReference>
<dbReference type="KEGG" id="sbi:8086354"/>
<dbReference type="eggNOG" id="ENOG502RZNK">
    <property type="taxonomic scope" value="Eukaryota"/>
</dbReference>
<dbReference type="HOGENOM" id="CLU_066104_1_1_1"/>
<dbReference type="InParanoid" id="C5XKI6"/>
<dbReference type="OMA" id="NNLNGME"/>
<dbReference type="OrthoDB" id="772477at2759"/>
<dbReference type="Proteomes" id="UP000000768">
    <property type="component" value="Chromosome 3"/>
</dbReference>
<dbReference type="GO" id="GO:0005886">
    <property type="term" value="C:plasma membrane"/>
    <property type="evidence" value="ECO:0007669"/>
    <property type="project" value="UniProtKB-SubCell"/>
</dbReference>
<dbReference type="InterPro" id="IPR006459">
    <property type="entry name" value="CASP/CASPL"/>
</dbReference>
<dbReference type="InterPro" id="IPR006702">
    <property type="entry name" value="CASP_dom"/>
</dbReference>
<dbReference type="InterPro" id="IPR044173">
    <property type="entry name" value="CASPL"/>
</dbReference>
<dbReference type="NCBIfam" id="TIGR01569">
    <property type="entry name" value="A_tha_TIGR01569"/>
    <property type="match status" value="1"/>
</dbReference>
<dbReference type="PANTHER" id="PTHR36488">
    <property type="entry name" value="CASP-LIKE PROTEIN 1U1"/>
    <property type="match status" value="1"/>
</dbReference>
<dbReference type="PANTHER" id="PTHR36488:SF8">
    <property type="entry name" value="CASP-LIKE PROTEIN 1U1"/>
    <property type="match status" value="1"/>
</dbReference>
<dbReference type="Pfam" id="PF04535">
    <property type="entry name" value="CASP_dom"/>
    <property type="match status" value="1"/>
</dbReference>
<protein>
    <recommendedName>
        <fullName>CASP-like protein 1E1</fullName>
        <shortName>SbCASPL1E1</shortName>
    </recommendedName>
</protein>
<accession>C5XKI6</accession>
<gene>
    <name type="ordered locus">Sb03g014480</name>
</gene>